<dbReference type="EC" id="6.1.1.4" evidence="1"/>
<dbReference type="EMBL" id="CP001197">
    <property type="protein sequence ID" value="ACL10027.1"/>
    <property type="molecule type" value="Genomic_DNA"/>
</dbReference>
<dbReference type="SMR" id="B8DJF0"/>
<dbReference type="STRING" id="883.DvMF_3090"/>
<dbReference type="KEGG" id="dvm:DvMF_3090"/>
<dbReference type="eggNOG" id="COG0495">
    <property type="taxonomic scope" value="Bacteria"/>
</dbReference>
<dbReference type="HOGENOM" id="CLU_004427_0_0_7"/>
<dbReference type="OrthoDB" id="9810365at2"/>
<dbReference type="GO" id="GO:0005829">
    <property type="term" value="C:cytosol"/>
    <property type="evidence" value="ECO:0007669"/>
    <property type="project" value="TreeGrafter"/>
</dbReference>
<dbReference type="GO" id="GO:0002161">
    <property type="term" value="F:aminoacyl-tRNA deacylase activity"/>
    <property type="evidence" value="ECO:0007669"/>
    <property type="project" value="InterPro"/>
</dbReference>
<dbReference type="GO" id="GO:0005524">
    <property type="term" value="F:ATP binding"/>
    <property type="evidence" value="ECO:0007669"/>
    <property type="project" value="UniProtKB-UniRule"/>
</dbReference>
<dbReference type="GO" id="GO:0004823">
    <property type="term" value="F:leucine-tRNA ligase activity"/>
    <property type="evidence" value="ECO:0007669"/>
    <property type="project" value="UniProtKB-UniRule"/>
</dbReference>
<dbReference type="GO" id="GO:0006429">
    <property type="term" value="P:leucyl-tRNA aminoacylation"/>
    <property type="evidence" value="ECO:0007669"/>
    <property type="project" value="UniProtKB-UniRule"/>
</dbReference>
<dbReference type="CDD" id="cd07958">
    <property type="entry name" value="Anticodon_Ia_Leu_BEm"/>
    <property type="match status" value="1"/>
</dbReference>
<dbReference type="CDD" id="cd00812">
    <property type="entry name" value="LeuRS_core"/>
    <property type="match status" value="1"/>
</dbReference>
<dbReference type="FunFam" id="1.10.730.10:FF:000002">
    <property type="entry name" value="Leucine--tRNA ligase"/>
    <property type="match status" value="1"/>
</dbReference>
<dbReference type="FunFam" id="3.10.20.590:FF:000001">
    <property type="entry name" value="Leucine--tRNA ligase"/>
    <property type="match status" value="1"/>
</dbReference>
<dbReference type="FunFam" id="3.40.50.620:FF:000003">
    <property type="entry name" value="Leucine--tRNA ligase"/>
    <property type="match status" value="1"/>
</dbReference>
<dbReference type="FunFam" id="3.40.50.620:FF:000056">
    <property type="entry name" value="Leucine--tRNA ligase"/>
    <property type="match status" value="1"/>
</dbReference>
<dbReference type="Gene3D" id="3.10.20.590">
    <property type="match status" value="1"/>
</dbReference>
<dbReference type="Gene3D" id="3.40.50.620">
    <property type="entry name" value="HUPs"/>
    <property type="match status" value="2"/>
</dbReference>
<dbReference type="Gene3D" id="1.10.730.10">
    <property type="entry name" value="Isoleucyl-tRNA Synthetase, Domain 1"/>
    <property type="match status" value="1"/>
</dbReference>
<dbReference type="HAMAP" id="MF_00049_B">
    <property type="entry name" value="Leu_tRNA_synth_B"/>
    <property type="match status" value="1"/>
</dbReference>
<dbReference type="InterPro" id="IPR001412">
    <property type="entry name" value="aa-tRNA-synth_I_CS"/>
</dbReference>
<dbReference type="InterPro" id="IPR002300">
    <property type="entry name" value="aa-tRNA-synth_Ia"/>
</dbReference>
<dbReference type="InterPro" id="IPR002302">
    <property type="entry name" value="Leu-tRNA-ligase"/>
</dbReference>
<dbReference type="InterPro" id="IPR025709">
    <property type="entry name" value="Leu_tRNA-synth_edit"/>
</dbReference>
<dbReference type="InterPro" id="IPR013155">
    <property type="entry name" value="M/V/L/I-tRNA-synth_anticd-bd"/>
</dbReference>
<dbReference type="InterPro" id="IPR015413">
    <property type="entry name" value="Methionyl/Leucyl_tRNA_Synth"/>
</dbReference>
<dbReference type="InterPro" id="IPR014729">
    <property type="entry name" value="Rossmann-like_a/b/a_fold"/>
</dbReference>
<dbReference type="InterPro" id="IPR009080">
    <property type="entry name" value="tRNAsynth_Ia_anticodon-bd"/>
</dbReference>
<dbReference type="InterPro" id="IPR009008">
    <property type="entry name" value="Val/Leu/Ile-tRNA-synth_edit"/>
</dbReference>
<dbReference type="NCBIfam" id="TIGR00396">
    <property type="entry name" value="leuS_bact"/>
    <property type="match status" value="1"/>
</dbReference>
<dbReference type="PANTHER" id="PTHR43740:SF2">
    <property type="entry name" value="LEUCINE--TRNA LIGASE, MITOCHONDRIAL"/>
    <property type="match status" value="1"/>
</dbReference>
<dbReference type="PANTHER" id="PTHR43740">
    <property type="entry name" value="LEUCYL-TRNA SYNTHETASE"/>
    <property type="match status" value="1"/>
</dbReference>
<dbReference type="Pfam" id="PF08264">
    <property type="entry name" value="Anticodon_1"/>
    <property type="match status" value="1"/>
</dbReference>
<dbReference type="Pfam" id="PF00133">
    <property type="entry name" value="tRNA-synt_1"/>
    <property type="match status" value="1"/>
</dbReference>
<dbReference type="Pfam" id="PF13603">
    <property type="entry name" value="tRNA-synt_1_2"/>
    <property type="match status" value="1"/>
</dbReference>
<dbReference type="Pfam" id="PF09334">
    <property type="entry name" value="tRNA-synt_1g"/>
    <property type="match status" value="1"/>
</dbReference>
<dbReference type="PRINTS" id="PR00985">
    <property type="entry name" value="TRNASYNTHLEU"/>
</dbReference>
<dbReference type="SUPFAM" id="SSF47323">
    <property type="entry name" value="Anticodon-binding domain of a subclass of class I aminoacyl-tRNA synthetases"/>
    <property type="match status" value="1"/>
</dbReference>
<dbReference type="SUPFAM" id="SSF52374">
    <property type="entry name" value="Nucleotidylyl transferase"/>
    <property type="match status" value="1"/>
</dbReference>
<dbReference type="SUPFAM" id="SSF50677">
    <property type="entry name" value="ValRS/IleRS/LeuRS editing domain"/>
    <property type="match status" value="1"/>
</dbReference>
<dbReference type="PROSITE" id="PS00178">
    <property type="entry name" value="AA_TRNA_LIGASE_I"/>
    <property type="match status" value="1"/>
</dbReference>
<keyword id="KW-0030">Aminoacyl-tRNA synthetase</keyword>
<keyword id="KW-0067">ATP-binding</keyword>
<keyword id="KW-0963">Cytoplasm</keyword>
<keyword id="KW-0436">Ligase</keyword>
<keyword id="KW-0547">Nucleotide-binding</keyword>
<keyword id="KW-0648">Protein biosynthesis</keyword>
<sequence length="834" mass="93505">MKYDHQSIEIKWQRTWEESGAFHCDHHSDKPKYYVLEMFPYPSGNIHMGHVRNYSIGDVVARFKRMQGFNVLHPMGWDAFGLPAENAAIKHGTHPAKWTFSNIDNMRTQLRRLGYSYDWRRELATCTPEYYRWEQQFFLRFFEKGLVYRKQAPQNWCPKCHTVLANEQVIEGLCWRCDSAVEQKNLTQWFLRITDYAEELLADLDKLEAGWPERVVSMQRNWIGKSIGAEIVFPLEGPGGSGNDDSITVFTTRQDTVFGATFMSLAPEHPLVEQLIDGKPEAPAVRAFVERIRNMDRIVRQSDDLEKEGVFTGAYCVNPFTGRRMPIWVANFVLAEYGTGAVMAVPAHDQRDFEFARKYDLPMQVVIQPEGDALDTAAMQAAWTEAGLLVNSGEFDGLPNEAAKQKIADSLETSGKGRRTVNYRLRDWNISRQRYWGAPIPVVYCDACGVVAEKDENLPVLLPLEVRTHEDGRSPLPDTPEFAECACPKCGGKARRETDTMDTFVESSWYFARYTSASKDDGAFDPAALKYWMPVDQYIGGVEHAILHLLYSRFFVKALRDCGYMDLDEPFANLLTQGMVLKEGAKMSKSKGNVVDPTEMIARYGADTVRLFCLFAAPPERDFDWSDSGIEGSYRFIGRIWRLAEELSGVLLPVKACSATAADAATPQGKDLRNKEHATVRKAGADISDRFQFNTAIAAVMELVNALYLAKDELSGDEGGRKVLSSAVATVLTLLSPITPHIAEELWASIGNAGRITDEPWPQWSEEALARDEETIVVQINGKLRGRVSVPAGADAKAIEAAALSEPNVARHLEDVTVRKVVVIPGKLVNVVVG</sequence>
<feature type="chain" id="PRO_1000199197" description="Leucine--tRNA ligase">
    <location>
        <begin position="1"/>
        <end position="834"/>
    </location>
</feature>
<feature type="short sequence motif" description="'HIGH' region">
    <location>
        <begin position="40"/>
        <end position="50"/>
    </location>
</feature>
<feature type="short sequence motif" description="'KMSKS' region">
    <location>
        <begin position="586"/>
        <end position="590"/>
    </location>
</feature>
<feature type="binding site" evidence="1">
    <location>
        <position position="589"/>
    </location>
    <ligand>
        <name>ATP</name>
        <dbReference type="ChEBI" id="CHEBI:30616"/>
    </ligand>
</feature>
<gene>
    <name evidence="1" type="primary">leuS</name>
    <name type="ordered locus">DvMF_3090</name>
</gene>
<evidence type="ECO:0000255" key="1">
    <source>
        <dbReference type="HAMAP-Rule" id="MF_00049"/>
    </source>
</evidence>
<organism>
    <name type="scientific">Nitratidesulfovibrio vulgaris (strain DSM 19637 / Miyazaki F)</name>
    <name type="common">Desulfovibrio vulgaris</name>
    <dbReference type="NCBI Taxonomy" id="883"/>
    <lineage>
        <taxon>Bacteria</taxon>
        <taxon>Pseudomonadati</taxon>
        <taxon>Thermodesulfobacteriota</taxon>
        <taxon>Desulfovibrionia</taxon>
        <taxon>Desulfovibrionales</taxon>
        <taxon>Desulfovibrionaceae</taxon>
        <taxon>Nitratidesulfovibrio</taxon>
    </lineage>
</organism>
<accession>B8DJF0</accession>
<name>SYL_NITV9</name>
<reference key="1">
    <citation type="submission" date="2008-10" db="EMBL/GenBank/DDBJ databases">
        <title>Complete sequence of Desulfovibrio vulgaris str. 'Miyazaki F'.</title>
        <authorList>
            <person name="Lucas S."/>
            <person name="Copeland A."/>
            <person name="Lapidus A."/>
            <person name="Glavina del Rio T."/>
            <person name="Dalin E."/>
            <person name="Tice H."/>
            <person name="Bruce D."/>
            <person name="Goodwin L."/>
            <person name="Pitluck S."/>
            <person name="Sims D."/>
            <person name="Brettin T."/>
            <person name="Detter J.C."/>
            <person name="Han C."/>
            <person name="Larimer F."/>
            <person name="Land M."/>
            <person name="Hauser L."/>
            <person name="Kyrpides N."/>
            <person name="Mikhailova N."/>
            <person name="Hazen T.C."/>
            <person name="Richardson P."/>
        </authorList>
    </citation>
    <scope>NUCLEOTIDE SEQUENCE [LARGE SCALE GENOMIC DNA]</scope>
    <source>
        <strain>DSM 19637 / Miyazaki F</strain>
    </source>
</reference>
<protein>
    <recommendedName>
        <fullName evidence="1">Leucine--tRNA ligase</fullName>
        <ecNumber evidence="1">6.1.1.4</ecNumber>
    </recommendedName>
    <alternativeName>
        <fullName evidence="1">Leucyl-tRNA synthetase</fullName>
        <shortName evidence="1">LeuRS</shortName>
    </alternativeName>
</protein>
<proteinExistence type="inferred from homology"/>
<comment type="catalytic activity">
    <reaction evidence="1">
        <text>tRNA(Leu) + L-leucine + ATP = L-leucyl-tRNA(Leu) + AMP + diphosphate</text>
        <dbReference type="Rhea" id="RHEA:11688"/>
        <dbReference type="Rhea" id="RHEA-COMP:9613"/>
        <dbReference type="Rhea" id="RHEA-COMP:9622"/>
        <dbReference type="ChEBI" id="CHEBI:30616"/>
        <dbReference type="ChEBI" id="CHEBI:33019"/>
        <dbReference type="ChEBI" id="CHEBI:57427"/>
        <dbReference type="ChEBI" id="CHEBI:78442"/>
        <dbReference type="ChEBI" id="CHEBI:78494"/>
        <dbReference type="ChEBI" id="CHEBI:456215"/>
        <dbReference type="EC" id="6.1.1.4"/>
    </reaction>
</comment>
<comment type="subcellular location">
    <subcellularLocation>
        <location evidence="1">Cytoplasm</location>
    </subcellularLocation>
</comment>
<comment type="similarity">
    <text evidence="1">Belongs to the class-I aminoacyl-tRNA synthetase family.</text>
</comment>